<sequence>MSSESPLLEKRLSEDSSRYLRLQKWANMSSADALGLEKERPEEKAAAAENPLVFLCARCRRPLGDSLTWVASQEDTNCILLRSVSCNVSVDKEPKLSKCRDEDGCILEALYCTGCSLSLGYVYRCTPKNLDYKRDLFCLSVEAVESYTLGSSEKQIVSEDKELFNLESRVEIEKSIKQMEEVLTALQKKLREVESKLSLASRGS</sequence>
<accession>Q9CZJ6</accession>
<keyword id="KW-0131">Cell cycle</keyword>
<keyword id="KW-0132">Cell division</keyword>
<keyword id="KW-0137">Centromere</keyword>
<keyword id="KW-0158">Chromosome</keyword>
<keyword id="KW-1017">Isopeptide bond</keyword>
<keyword id="KW-0479">Metal-binding</keyword>
<keyword id="KW-0498">Mitosis</keyword>
<keyword id="KW-0539">Nucleus</keyword>
<keyword id="KW-0597">Phosphoprotein</keyword>
<keyword id="KW-1185">Reference proteome</keyword>
<keyword id="KW-0832">Ubl conjugation</keyword>
<keyword id="KW-0862">Zinc</keyword>
<comment type="function">
    <text evidence="1">Required for recruitment of CENPA to centromeres and normal chromosome segregation during mitosis.</text>
</comment>
<comment type="subunit">
    <text evidence="1">Homodimer, and heterodimer with OIP5/MIS18B. Identified in a complex containing MIS18A, OIP5/MIS18B, MIS18BP1, RBBP7 and RBBP4.</text>
</comment>
<comment type="subcellular location">
    <subcellularLocation>
        <location evidence="1">Nucleus</location>
    </subcellularLocation>
    <subcellularLocation>
        <location evidence="1">Chromosome</location>
    </subcellularLocation>
    <subcellularLocation>
        <location evidence="1">Chromosome</location>
        <location evidence="1">Centromere</location>
    </subcellularLocation>
    <text evidence="1">Associated with centromeres in interphase cells, from late anaphase to the G1 phase. Not detected on centromeres during earlier phases of mitosis. Associated with chromatin.</text>
</comment>
<comment type="similarity">
    <text evidence="2">Belongs to the mis18 family.</text>
</comment>
<name>MS18A_MOUSE</name>
<gene>
    <name type="primary">Mis18a</name>
</gene>
<dbReference type="EMBL" id="AK012533">
    <property type="protein sequence ID" value="BAB28302.1"/>
    <property type="molecule type" value="mRNA"/>
</dbReference>
<dbReference type="EMBL" id="AK163310">
    <property type="protein sequence ID" value="BAE37292.1"/>
    <property type="molecule type" value="mRNA"/>
</dbReference>
<dbReference type="EMBL" id="BC079900">
    <property type="protein sequence ID" value="AAH79900.1"/>
    <property type="molecule type" value="mRNA"/>
</dbReference>
<dbReference type="CCDS" id="CCDS28316.1"/>
<dbReference type="RefSeq" id="NP_079918.1">
    <property type="nucleotide sequence ID" value="NM_025642.1"/>
</dbReference>
<dbReference type="SMR" id="Q9CZJ6"/>
<dbReference type="ComplexPortal" id="CPX-3273">
    <property type="entry name" value="Mis18 complex"/>
</dbReference>
<dbReference type="FunCoup" id="Q9CZJ6">
    <property type="interactions" value="2341"/>
</dbReference>
<dbReference type="STRING" id="10090.ENSMUSP00000097150"/>
<dbReference type="iPTMnet" id="Q9CZJ6"/>
<dbReference type="PhosphoSitePlus" id="Q9CZJ6"/>
<dbReference type="PaxDb" id="10090-ENSMUSP00000097150"/>
<dbReference type="ProteomicsDB" id="291352"/>
<dbReference type="Antibodypedia" id="6843">
    <property type="antibodies" value="58 antibodies from 18 providers"/>
</dbReference>
<dbReference type="Ensembl" id="ENSMUST00000099554.5">
    <property type="protein sequence ID" value="ENSMUSP00000097150.5"/>
    <property type="gene ID" value="ENSMUSG00000022978.12"/>
</dbReference>
<dbReference type="GeneID" id="66578"/>
<dbReference type="KEGG" id="mmu:66578"/>
<dbReference type="UCSC" id="uc007zwj.1">
    <property type="organism name" value="mouse"/>
</dbReference>
<dbReference type="AGR" id="MGI:1913828"/>
<dbReference type="CTD" id="54069"/>
<dbReference type="MGI" id="MGI:1913828">
    <property type="gene designation" value="Mis18a"/>
</dbReference>
<dbReference type="VEuPathDB" id="HostDB:ENSMUSG00000022978"/>
<dbReference type="eggNOG" id="ENOG502S3DZ">
    <property type="taxonomic scope" value="Eukaryota"/>
</dbReference>
<dbReference type="GeneTree" id="ENSGT00940000154267"/>
<dbReference type="HOGENOM" id="CLU_101031_0_0_1"/>
<dbReference type="InParanoid" id="Q9CZJ6"/>
<dbReference type="OMA" id="EMKMLVM"/>
<dbReference type="OrthoDB" id="74210at2759"/>
<dbReference type="PhylomeDB" id="Q9CZJ6"/>
<dbReference type="TreeFam" id="TF333200"/>
<dbReference type="Reactome" id="R-MMU-606279">
    <property type="pathway name" value="Deposition of new CENPA-containing nucleosomes at the centromere"/>
</dbReference>
<dbReference type="BioGRID-ORCS" id="66578">
    <property type="hits" value="26 hits in 81 CRISPR screens"/>
</dbReference>
<dbReference type="ChiTaRS" id="Mis18a">
    <property type="organism name" value="mouse"/>
</dbReference>
<dbReference type="PRO" id="PR:Q9CZJ6"/>
<dbReference type="Proteomes" id="UP000000589">
    <property type="component" value="Chromosome 16"/>
</dbReference>
<dbReference type="RNAct" id="Q9CZJ6">
    <property type="molecule type" value="protein"/>
</dbReference>
<dbReference type="Bgee" id="ENSMUSG00000022978">
    <property type="expression patterns" value="Expressed in paneth cell and 259 other cell types or tissues"/>
</dbReference>
<dbReference type="GO" id="GO:0098654">
    <property type="term" value="C:CENP-A recruiting complex"/>
    <property type="evidence" value="ECO:0000314"/>
    <property type="project" value="MGI"/>
</dbReference>
<dbReference type="GO" id="GO:0000775">
    <property type="term" value="C:chromosome, centromeric region"/>
    <property type="evidence" value="ECO:0000314"/>
    <property type="project" value="MGI"/>
</dbReference>
<dbReference type="GO" id="GO:0005829">
    <property type="term" value="C:cytosol"/>
    <property type="evidence" value="ECO:0007669"/>
    <property type="project" value="Ensembl"/>
</dbReference>
<dbReference type="GO" id="GO:0005654">
    <property type="term" value="C:nucleoplasm"/>
    <property type="evidence" value="ECO:0007669"/>
    <property type="project" value="Ensembl"/>
</dbReference>
<dbReference type="GO" id="GO:0042802">
    <property type="term" value="F:identical protein binding"/>
    <property type="evidence" value="ECO:0007669"/>
    <property type="project" value="Ensembl"/>
</dbReference>
<dbReference type="GO" id="GO:0046872">
    <property type="term" value="F:metal ion binding"/>
    <property type="evidence" value="ECO:0007669"/>
    <property type="project" value="UniProtKB-KW"/>
</dbReference>
<dbReference type="GO" id="GO:0030674">
    <property type="term" value="F:protein-macromolecule adaptor activity"/>
    <property type="evidence" value="ECO:0000314"/>
    <property type="project" value="MGI"/>
</dbReference>
<dbReference type="GO" id="GO:0051301">
    <property type="term" value="P:cell division"/>
    <property type="evidence" value="ECO:0007669"/>
    <property type="project" value="UniProtKB-KW"/>
</dbReference>
<dbReference type="GO" id="GO:0034080">
    <property type="term" value="P:CENP-A containing chromatin assembly"/>
    <property type="evidence" value="ECO:0000315"/>
    <property type="project" value="MGI"/>
</dbReference>
<dbReference type="GO" id="GO:0007059">
    <property type="term" value="P:chromosome segregation"/>
    <property type="evidence" value="ECO:0000315"/>
    <property type="project" value="MGI"/>
</dbReference>
<dbReference type="GO" id="GO:0031507">
    <property type="term" value="P:heterochromatin formation"/>
    <property type="evidence" value="ECO:0000315"/>
    <property type="project" value="MGI"/>
</dbReference>
<dbReference type="GO" id="GO:0140462">
    <property type="term" value="P:pericentric heterochromatin organization"/>
    <property type="evidence" value="ECO:0000315"/>
    <property type="project" value="MGI"/>
</dbReference>
<dbReference type="GO" id="GO:0071459">
    <property type="term" value="P:protein localization to chromosome, centromeric region"/>
    <property type="evidence" value="ECO:0000314"/>
    <property type="project" value="MGI"/>
</dbReference>
<dbReference type="InterPro" id="IPR034752">
    <property type="entry name" value="Mis18"/>
</dbReference>
<dbReference type="InterPro" id="IPR004910">
    <property type="entry name" value="Yippee/Mis18/Cereblon"/>
</dbReference>
<dbReference type="PANTHER" id="PTHR16431">
    <property type="entry name" value="NEUROGENIC PROTEIN MASTERMIND"/>
    <property type="match status" value="1"/>
</dbReference>
<dbReference type="PANTHER" id="PTHR16431:SF2">
    <property type="entry name" value="PROTEIN MIS18-ALPHA"/>
    <property type="match status" value="1"/>
</dbReference>
<dbReference type="Pfam" id="PF03226">
    <property type="entry name" value="Yippee-Mis18"/>
    <property type="match status" value="1"/>
</dbReference>
<dbReference type="PROSITE" id="PS51793">
    <property type="entry name" value="MIS18"/>
    <property type="match status" value="1"/>
</dbReference>
<protein>
    <recommendedName>
        <fullName>Protein Mis18-alpha</fullName>
    </recommendedName>
</protein>
<proteinExistence type="evidence at transcript level"/>
<feature type="chain" id="PRO_0000278473" description="Protein Mis18-alpha">
    <location>
        <begin position="1"/>
        <end position="204"/>
    </location>
</feature>
<feature type="domain" description="Mis18" evidence="2">
    <location>
        <begin position="51"/>
        <end position="149"/>
    </location>
</feature>
<feature type="binding site" evidence="2">
    <location>
        <position position="56"/>
    </location>
    <ligand>
        <name>Zn(2+)</name>
        <dbReference type="ChEBI" id="CHEBI:29105"/>
    </ligand>
</feature>
<feature type="binding site" evidence="2">
    <location>
        <position position="59"/>
    </location>
    <ligand>
        <name>Zn(2+)</name>
        <dbReference type="ChEBI" id="CHEBI:29105"/>
    </ligand>
</feature>
<feature type="binding site" evidence="2">
    <location>
        <position position="112"/>
    </location>
    <ligand>
        <name>Zn(2+)</name>
        <dbReference type="ChEBI" id="CHEBI:29105"/>
    </ligand>
</feature>
<feature type="binding site" evidence="2">
    <location>
        <position position="115"/>
    </location>
    <ligand>
        <name>Zn(2+)</name>
        <dbReference type="ChEBI" id="CHEBI:29105"/>
    </ligand>
</feature>
<feature type="modified residue" description="Phosphoserine" evidence="1">
    <location>
        <position position="13"/>
    </location>
</feature>
<feature type="modified residue" description="Phosphoserine" evidence="1">
    <location>
        <position position="16"/>
    </location>
</feature>
<feature type="modified residue" description="Phosphoserine" evidence="1">
    <location>
        <position position="17"/>
    </location>
</feature>
<feature type="modified residue" description="Phosphoserine" evidence="1">
    <location>
        <position position="204"/>
    </location>
</feature>
<feature type="cross-link" description="Glycyl lysine isopeptide (Lys-Gly) (interchain with G-Cter in SUMO2)" evidence="1">
    <location>
        <position position="133"/>
    </location>
</feature>
<organism>
    <name type="scientific">Mus musculus</name>
    <name type="common">Mouse</name>
    <dbReference type="NCBI Taxonomy" id="10090"/>
    <lineage>
        <taxon>Eukaryota</taxon>
        <taxon>Metazoa</taxon>
        <taxon>Chordata</taxon>
        <taxon>Craniata</taxon>
        <taxon>Vertebrata</taxon>
        <taxon>Euteleostomi</taxon>
        <taxon>Mammalia</taxon>
        <taxon>Eutheria</taxon>
        <taxon>Euarchontoglires</taxon>
        <taxon>Glires</taxon>
        <taxon>Rodentia</taxon>
        <taxon>Myomorpha</taxon>
        <taxon>Muroidea</taxon>
        <taxon>Muridae</taxon>
        <taxon>Murinae</taxon>
        <taxon>Mus</taxon>
        <taxon>Mus</taxon>
    </lineage>
</organism>
<reference key="1">
    <citation type="journal article" date="2005" name="Science">
        <title>The transcriptional landscape of the mammalian genome.</title>
        <authorList>
            <person name="Carninci P."/>
            <person name="Kasukawa T."/>
            <person name="Katayama S."/>
            <person name="Gough J."/>
            <person name="Frith M.C."/>
            <person name="Maeda N."/>
            <person name="Oyama R."/>
            <person name="Ravasi T."/>
            <person name="Lenhard B."/>
            <person name="Wells C."/>
            <person name="Kodzius R."/>
            <person name="Shimokawa K."/>
            <person name="Bajic V.B."/>
            <person name="Brenner S.E."/>
            <person name="Batalov S."/>
            <person name="Forrest A.R."/>
            <person name="Zavolan M."/>
            <person name="Davis M.J."/>
            <person name="Wilming L.G."/>
            <person name="Aidinis V."/>
            <person name="Allen J.E."/>
            <person name="Ambesi-Impiombato A."/>
            <person name="Apweiler R."/>
            <person name="Aturaliya R.N."/>
            <person name="Bailey T.L."/>
            <person name="Bansal M."/>
            <person name="Baxter L."/>
            <person name="Beisel K.W."/>
            <person name="Bersano T."/>
            <person name="Bono H."/>
            <person name="Chalk A.M."/>
            <person name="Chiu K.P."/>
            <person name="Choudhary V."/>
            <person name="Christoffels A."/>
            <person name="Clutterbuck D.R."/>
            <person name="Crowe M.L."/>
            <person name="Dalla E."/>
            <person name="Dalrymple B.P."/>
            <person name="de Bono B."/>
            <person name="Della Gatta G."/>
            <person name="di Bernardo D."/>
            <person name="Down T."/>
            <person name="Engstrom P."/>
            <person name="Fagiolini M."/>
            <person name="Faulkner G."/>
            <person name="Fletcher C.F."/>
            <person name="Fukushima T."/>
            <person name="Furuno M."/>
            <person name="Futaki S."/>
            <person name="Gariboldi M."/>
            <person name="Georgii-Hemming P."/>
            <person name="Gingeras T.R."/>
            <person name="Gojobori T."/>
            <person name="Green R.E."/>
            <person name="Gustincich S."/>
            <person name="Harbers M."/>
            <person name="Hayashi Y."/>
            <person name="Hensch T.K."/>
            <person name="Hirokawa N."/>
            <person name="Hill D."/>
            <person name="Huminiecki L."/>
            <person name="Iacono M."/>
            <person name="Ikeo K."/>
            <person name="Iwama A."/>
            <person name="Ishikawa T."/>
            <person name="Jakt M."/>
            <person name="Kanapin A."/>
            <person name="Katoh M."/>
            <person name="Kawasawa Y."/>
            <person name="Kelso J."/>
            <person name="Kitamura H."/>
            <person name="Kitano H."/>
            <person name="Kollias G."/>
            <person name="Krishnan S.P."/>
            <person name="Kruger A."/>
            <person name="Kummerfeld S.K."/>
            <person name="Kurochkin I.V."/>
            <person name="Lareau L.F."/>
            <person name="Lazarevic D."/>
            <person name="Lipovich L."/>
            <person name="Liu J."/>
            <person name="Liuni S."/>
            <person name="McWilliam S."/>
            <person name="Madan Babu M."/>
            <person name="Madera M."/>
            <person name="Marchionni L."/>
            <person name="Matsuda H."/>
            <person name="Matsuzawa S."/>
            <person name="Miki H."/>
            <person name="Mignone F."/>
            <person name="Miyake S."/>
            <person name="Morris K."/>
            <person name="Mottagui-Tabar S."/>
            <person name="Mulder N."/>
            <person name="Nakano N."/>
            <person name="Nakauchi H."/>
            <person name="Ng P."/>
            <person name="Nilsson R."/>
            <person name="Nishiguchi S."/>
            <person name="Nishikawa S."/>
            <person name="Nori F."/>
            <person name="Ohara O."/>
            <person name="Okazaki Y."/>
            <person name="Orlando V."/>
            <person name="Pang K.C."/>
            <person name="Pavan W.J."/>
            <person name="Pavesi G."/>
            <person name="Pesole G."/>
            <person name="Petrovsky N."/>
            <person name="Piazza S."/>
            <person name="Reed J."/>
            <person name="Reid J.F."/>
            <person name="Ring B.Z."/>
            <person name="Ringwald M."/>
            <person name="Rost B."/>
            <person name="Ruan Y."/>
            <person name="Salzberg S.L."/>
            <person name="Sandelin A."/>
            <person name="Schneider C."/>
            <person name="Schoenbach C."/>
            <person name="Sekiguchi K."/>
            <person name="Semple C.A."/>
            <person name="Seno S."/>
            <person name="Sessa L."/>
            <person name="Sheng Y."/>
            <person name="Shibata Y."/>
            <person name="Shimada H."/>
            <person name="Shimada K."/>
            <person name="Silva D."/>
            <person name="Sinclair B."/>
            <person name="Sperling S."/>
            <person name="Stupka E."/>
            <person name="Sugiura K."/>
            <person name="Sultana R."/>
            <person name="Takenaka Y."/>
            <person name="Taki K."/>
            <person name="Tammoja K."/>
            <person name="Tan S.L."/>
            <person name="Tang S."/>
            <person name="Taylor M.S."/>
            <person name="Tegner J."/>
            <person name="Teichmann S.A."/>
            <person name="Ueda H.R."/>
            <person name="van Nimwegen E."/>
            <person name="Verardo R."/>
            <person name="Wei C.L."/>
            <person name="Yagi K."/>
            <person name="Yamanishi H."/>
            <person name="Zabarovsky E."/>
            <person name="Zhu S."/>
            <person name="Zimmer A."/>
            <person name="Hide W."/>
            <person name="Bult C."/>
            <person name="Grimmond S.M."/>
            <person name="Teasdale R.D."/>
            <person name="Liu E.T."/>
            <person name="Brusic V."/>
            <person name="Quackenbush J."/>
            <person name="Wahlestedt C."/>
            <person name="Mattick J.S."/>
            <person name="Hume D.A."/>
            <person name="Kai C."/>
            <person name="Sasaki D."/>
            <person name="Tomaru Y."/>
            <person name="Fukuda S."/>
            <person name="Kanamori-Katayama M."/>
            <person name="Suzuki M."/>
            <person name="Aoki J."/>
            <person name="Arakawa T."/>
            <person name="Iida J."/>
            <person name="Imamura K."/>
            <person name="Itoh M."/>
            <person name="Kato T."/>
            <person name="Kawaji H."/>
            <person name="Kawagashira N."/>
            <person name="Kawashima T."/>
            <person name="Kojima M."/>
            <person name="Kondo S."/>
            <person name="Konno H."/>
            <person name="Nakano K."/>
            <person name="Ninomiya N."/>
            <person name="Nishio T."/>
            <person name="Okada M."/>
            <person name="Plessy C."/>
            <person name="Shibata K."/>
            <person name="Shiraki T."/>
            <person name="Suzuki S."/>
            <person name="Tagami M."/>
            <person name="Waki K."/>
            <person name="Watahiki A."/>
            <person name="Okamura-Oho Y."/>
            <person name="Suzuki H."/>
            <person name="Kawai J."/>
            <person name="Hayashizaki Y."/>
        </authorList>
    </citation>
    <scope>NUCLEOTIDE SEQUENCE [LARGE SCALE MRNA]</scope>
    <source>
        <strain>C57BL/6J</strain>
        <tissue>Egg</tissue>
    </source>
</reference>
<reference key="2">
    <citation type="journal article" date="2004" name="Genome Res.">
        <title>The status, quality, and expansion of the NIH full-length cDNA project: the Mammalian Gene Collection (MGC).</title>
        <authorList>
            <consortium name="The MGC Project Team"/>
        </authorList>
    </citation>
    <scope>NUCLEOTIDE SEQUENCE [LARGE SCALE MRNA]</scope>
    <source>
        <strain>C57BL/6J</strain>
        <tissue>Eye</tissue>
    </source>
</reference>
<evidence type="ECO:0000250" key="1">
    <source>
        <dbReference type="UniProtKB" id="Q9NYP9"/>
    </source>
</evidence>
<evidence type="ECO:0000255" key="2">
    <source>
        <dbReference type="PROSITE-ProRule" id="PRU01129"/>
    </source>
</evidence>